<reference key="1">
    <citation type="journal article" date="2007" name="Mol. Biol. Evol.">
        <title>The complete chloroplast and mitochondrial DNA sequence of Ostreococcus tauri: organelle genomes of the smallest eukaryote are examples of compaction.</title>
        <authorList>
            <person name="Robbens S."/>
            <person name="Derelle E."/>
            <person name="Ferraz C."/>
            <person name="Wuyts J."/>
            <person name="Moreau H."/>
            <person name="Van de Peer Y."/>
        </authorList>
    </citation>
    <scope>NUCLEOTIDE SEQUENCE [LARGE SCALE GENOMIC DNA]</scope>
    <source>
        <strain>OTTH0595</strain>
    </source>
</reference>
<evidence type="ECO:0000250" key="1"/>
<evidence type="ECO:0000255" key="2">
    <source>
        <dbReference type="HAMAP-Rule" id="MF_01320"/>
    </source>
</evidence>
<evidence type="ECO:0000256" key="3">
    <source>
        <dbReference type="SAM" id="MobiDB-lite"/>
    </source>
</evidence>
<evidence type="ECO:0000305" key="4"/>
<protein>
    <recommendedName>
        <fullName evidence="2">Large ribosomal subunit protein uL2c</fullName>
    </recommendedName>
    <alternativeName>
        <fullName evidence="4">50S ribosomal protein L2, chloroplastic</fullName>
    </alternativeName>
</protein>
<proteinExistence type="inferred from homology"/>
<accession>Q0P3L9</accession>
<organism>
    <name type="scientific">Ostreococcus tauri</name>
    <dbReference type="NCBI Taxonomy" id="70448"/>
    <lineage>
        <taxon>Eukaryota</taxon>
        <taxon>Viridiplantae</taxon>
        <taxon>Chlorophyta</taxon>
        <taxon>Mamiellophyceae</taxon>
        <taxon>Mamiellales</taxon>
        <taxon>Bathycoccaceae</taxon>
        <taxon>Ostreococcus</taxon>
    </lineage>
</organism>
<feature type="chain" id="PRO_0000277095" description="Large ribosomal subunit protein uL2c">
    <location>
        <begin position="1"/>
        <end position="277"/>
    </location>
</feature>
<feature type="region of interest" description="Disordered" evidence="3">
    <location>
        <begin position="228"/>
        <end position="254"/>
    </location>
</feature>
<dbReference type="EMBL" id="CR954199">
    <property type="protein sequence ID" value="CAL36358.1"/>
    <property type="molecule type" value="Genomic_DNA"/>
</dbReference>
<dbReference type="RefSeq" id="YP_717236.1">
    <property type="nucleotide sequence ID" value="NC_008289.1"/>
</dbReference>
<dbReference type="SMR" id="Q0P3L9"/>
<dbReference type="FunCoup" id="Q0P3L9">
    <property type="interactions" value="501"/>
</dbReference>
<dbReference type="STRING" id="70448.Q0P3L9"/>
<dbReference type="GeneID" id="4238791"/>
<dbReference type="KEGG" id="ota:OstapCp33"/>
<dbReference type="eggNOG" id="KOG0438">
    <property type="taxonomic scope" value="Eukaryota"/>
</dbReference>
<dbReference type="InParanoid" id="Q0P3L9"/>
<dbReference type="Proteomes" id="UP000009170">
    <property type="component" value="Chloroplast"/>
</dbReference>
<dbReference type="GO" id="GO:0009507">
    <property type="term" value="C:chloroplast"/>
    <property type="evidence" value="ECO:0007669"/>
    <property type="project" value="UniProtKB-SubCell"/>
</dbReference>
<dbReference type="GO" id="GO:0005762">
    <property type="term" value="C:mitochondrial large ribosomal subunit"/>
    <property type="evidence" value="ECO:0007669"/>
    <property type="project" value="TreeGrafter"/>
</dbReference>
<dbReference type="GO" id="GO:0019843">
    <property type="term" value="F:rRNA binding"/>
    <property type="evidence" value="ECO:0007669"/>
    <property type="project" value="UniProtKB-UniRule"/>
</dbReference>
<dbReference type="GO" id="GO:0003735">
    <property type="term" value="F:structural constituent of ribosome"/>
    <property type="evidence" value="ECO:0007669"/>
    <property type="project" value="InterPro"/>
</dbReference>
<dbReference type="GO" id="GO:0016740">
    <property type="term" value="F:transferase activity"/>
    <property type="evidence" value="ECO:0007669"/>
    <property type="project" value="InterPro"/>
</dbReference>
<dbReference type="GO" id="GO:0032543">
    <property type="term" value="P:mitochondrial translation"/>
    <property type="evidence" value="ECO:0007669"/>
    <property type="project" value="TreeGrafter"/>
</dbReference>
<dbReference type="FunFam" id="2.30.30.30:FF:000001">
    <property type="entry name" value="50S ribosomal protein L2"/>
    <property type="match status" value="1"/>
</dbReference>
<dbReference type="FunFam" id="2.40.50.140:FF:000003">
    <property type="entry name" value="50S ribosomal protein L2"/>
    <property type="match status" value="1"/>
</dbReference>
<dbReference type="FunFam" id="4.10.950.10:FF:000001">
    <property type="entry name" value="50S ribosomal protein L2"/>
    <property type="match status" value="1"/>
</dbReference>
<dbReference type="Gene3D" id="2.30.30.30">
    <property type="match status" value="1"/>
</dbReference>
<dbReference type="Gene3D" id="2.40.50.140">
    <property type="entry name" value="Nucleic acid-binding proteins"/>
    <property type="match status" value="1"/>
</dbReference>
<dbReference type="Gene3D" id="4.10.950.10">
    <property type="entry name" value="Ribosomal protein L2, domain 3"/>
    <property type="match status" value="1"/>
</dbReference>
<dbReference type="HAMAP" id="MF_01320_B">
    <property type="entry name" value="Ribosomal_uL2_B"/>
    <property type="match status" value="1"/>
</dbReference>
<dbReference type="InterPro" id="IPR012340">
    <property type="entry name" value="NA-bd_OB-fold"/>
</dbReference>
<dbReference type="InterPro" id="IPR014722">
    <property type="entry name" value="Rib_uL2_dom2"/>
</dbReference>
<dbReference type="InterPro" id="IPR002171">
    <property type="entry name" value="Ribosomal_uL2"/>
</dbReference>
<dbReference type="InterPro" id="IPR005880">
    <property type="entry name" value="Ribosomal_uL2_bac/org-type"/>
</dbReference>
<dbReference type="InterPro" id="IPR022669">
    <property type="entry name" value="Ribosomal_uL2_C"/>
</dbReference>
<dbReference type="InterPro" id="IPR022671">
    <property type="entry name" value="Ribosomal_uL2_CS"/>
</dbReference>
<dbReference type="InterPro" id="IPR014726">
    <property type="entry name" value="Ribosomal_uL2_dom3"/>
</dbReference>
<dbReference type="InterPro" id="IPR022666">
    <property type="entry name" value="Ribosomal_uL2_RNA-bd_dom"/>
</dbReference>
<dbReference type="InterPro" id="IPR008991">
    <property type="entry name" value="Translation_prot_SH3-like_sf"/>
</dbReference>
<dbReference type="NCBIfam" id="TIGR01171">
    <property type="entry name" value="rplB_bact"/>
    <property type="match status" value="1"/>
</dbReference>
<dbReference type="PANTHER" id="PTHR13691:SF5">
    <property type="entry name" value="LARGE RIBOSOMAL SUBUNIT PROTEIN UL2M"/>
    <property type="match status" value="1"/>
</dbReference>
<dbReference type="PANTHER" id="PTHR13691">
    <property type="entry name" value="RIBOSOMAL PROTEIN L2"/>
    <property type="match status" value="1"/>
</dbReference>
<dbReference type="Pfam" id="PF00181">
    <property type="entry name" value="Ribosomal_L2"/>
    <property type="match status" value="1"/>
</dbReference>
<dbReference type="Pfam" id="PF03947">
    <property type="entry name" value="Ribosomal_L2_C"/>
    <property type="match status" value="1"/>
</dbReference>
<dbReference type="PIRSF" id="PIRSF002158">
    <property type="entry name" value="Ribosomal_L2"/>
    <property type="match status" value="1"/>
</dbReference>
<dbReference type="SMART" id="SM01383">
    <property type="entry name" value="Ribosomal_L2"/>
    <property type="match status" value="1"/>
</dbReference>
<dbReference type="SMART" id="SM01382">
    <property type="entry name" value="Ribosomal_L2_C"/>
    <property type="match status" value="1"/>
</dbReference>
<dbReference type="SUPFAM" id="SSF50249">
    <property type="entry name" value="Nucleic acid-binding proteins"/>
    <property type="match status" value="1"/>
</dbReference>
<dbReference type="SUPFAM" id="SSF50104">
    <property type="entry name" value="Translation proteins SH3-like domain"/>
    <property type="match status" value="1"/>
</dbReference>
<dbReference type="PROSITE" id="PS00467">
    <property type="entry name" value="RIBOSOMAL_L2"/>
    <property type="match status" value="1"/>
</dbReference>
<keyword id="KW-0150">Chloroplast</keyword>
<keyword id="KW-0934">Plastid</keyword>
<keyword id="KW-1185">Reference proteome</keyword>
<keyword id="KW-0687">Ribonucleoprotein</keyword>
<keyword id="KW-0689">Ribosomal protein</keyword>
<gene>
    <name type="primary">rpl2</name>
    <name type="ordered locus">OtCpg00330</name>
</gene>
<sequence>MALRFYKAYTPGTRNRSVADCSGLTKTRPEKSLTRSMHRAKGRNNRGVITCRHRGGGHKRLYRQIDFRRNKYDMAATVKTIEYDPNRNARIALVEYQDGEKRYILHPNGLEIGDSIIASETAVNAVGNSLPLMAMPLGVQVHNIEMHPKKGGQLVRSAGAVAQLVAKEGEYVTLRLPSGEVRLISNKCWATIGQVGNMEAMNLSLGKAGRSRWLGRRPTVRGSVMNAVDHPHGGGEGRCPVGHAQPRTPWGKPALGVKTRTRKKYSDTLILRRRKVS</sequence>
<name>RK2_OSTTA</name>
<geneLocation type="chloroplast"/>
<comment type="subunit">
    <text evidence="1">Part of the 50S ribosomal subunit.</text>
</comment>
<comment type="subcellular location">
    <subcellularLocation>
        <location>Plastid</location>
        <location>Chloroplast</location>
    </subcellularLocation>
</comment>
<comment type="similarity">
    <text evidence="4">Belongs to the universal ribosomal protein uL2 family.</text>
</comment>